<accession>Q4J8L9</accession>
<sequence length="592" mass="66143">MAGEGRVVRVNGPLVVADGMRNAQMFEVVEVGELRLVGEITRIEGDRAYIQVYEATDGIKPGEKAYRTGSLLSVELGPGLMGGIFDGLQRPLDRIAESVKSPFVTRGVKVPALERNKKWHVIPVAKKGDKVSPGDIIAKVNETDLIEHRIIVPPNVHGTLKEISPEGDYTVEDVIARVDMEGDVKELKLYQRWPVRIPRPFKEKLEPTEPLLTGTRVVDTIFPIAKGGTAAIPGPFGSGKTVTLQSLAKWSEAKVVIYVGCGERGNEMTDELRQFPKLKDPWTGKPLLQRTILVANTSNMPVAARESSIYVGVTMAEYFRDQGYDVLLVADSTSRWAEALRELGGRMEEMPAEEGFPSYLPSRLAEYYERAGRVIALGKPERFGSVSIASAVSPPGGDFTEPVTSNTLRFVRVFWPLDVSLAQARHYPAINWIQGFSAYVDLVASWWHKNVDPTWFEMRSVLVKILLREDELRQIVRLVGPESLSDKDKLILEASKLIRDAFLKQNAFDDIDAFSSPQKQAKIMRLIYDFYTNASQLLDKGLTLKKILEKVGSFEPDIVRVKYTVKNDELNKIDELDNKLKEAFDSLLKEVA</sequence>
<dbReference type="EC" id="7.1.2.2" evidence="1"/>
<dbReference type="EMBL" id="CP000077">
    <property type="protein sequence ID" value="AAY80861.1"/>
    <property type="molecule type" value="Genomic_DNA"/>
</dbReference>
<dbReference type="RefSeq" id="WP_011278363.1">
    <property type="nucleotide sequence ID" value="NC_007181.1"/>
</dbReference>
<dbReference type="SMR" id="Q4J8L9"/>
<dbReference type="STRING" id="330779.Saci_1548"/>
<dbReference type="GeneID" id="14552041"/>
<dbReference type="KEGG" id="sai:Saci_1548"/>
<dbReference type="PATRIC" id="fig|330779.12.peg.1488"/>
<dbReference type="eggNOG" id="arCOG00868">
    <property type="taxonomic scope" value="Archaea"/>
</dbReference>
<dbReference type="HOGENOM" id="CLU_008162_3_1_2"/>
<dbReference type="Proteomes" id="UP000001018">
    <property type="component" value="Chromosome"/>
</dbReference>
<dbReference type="GO" id="GO:0005886">
    <property type="term" value="C:plasma membrane"/>
    <property type="evidence" value="ECO:0007669"/>
    <property type="project" value="UniProtKB-SubCell"/>
</dbReference>
<dbReference type="GO" id="GO:0033178">
    <property type="term" value="C:proton-transporting two-sector ATPase complex, catalytic domain"/>
    <property type="evidence" value="ECO:0007669"/>
    <property type="project" value="InterPro"/>
</dbReference>
<dbReference type="GO" id="GO:0005524">
    <property type="term" value="F:ATP binding"/>
    <property type="evidence" value="ECO:0007669"/>
    <property type="project" value="UniProtKB-UniRule"/>
</dbReference>
<dbReference type="GO" id="GO:0016887">
    <property type="term" value="F:ATP hydrolysis activity"/>
    <property type="evidence" value="ECO:0007669"/>
    <property type="project" value="InterPro"/>
</dbReference>
<dbReference type="GO" id="GO:0046933">
    <property type="term" value="F:proton-transporting ATP synthase activity, rotational mechanism"/>
    <property type="evidence" value="ECO:0007669"/>
    <property type="project" value="UniProtKB-UniRule"/>
</dbReference>
<dbReference type="GO" id="GO:0046961">
    <property type="term" value="F:proton-transporting ATPase activity, rotational mechanism"/>
    <property type="evidence" value="ECO:0007669"/>
    <property type="project" value="InterPro"/>
</dbReference>
<dbReference type="GO" id="GO:0042777">
    <property type="term" value="P:proton motive force-driven plasma membrane ATP synthesis"/>
    <property type="evidence" value="ECO:0007669"/>
    <property type="project" value="UniProtKB-UniRule"/>
</dbReference>
<dbReference type="CDD" id="cd18111">
    <property type="entry name" value="ATP-synt_V_A-type_alpha_C"/>
    <property type="match status" value="1"/>
</dbReference>
<dbReference type="CDD" id="cd18119">
    <property type="entry name" value="ATP-synt_V_A-type_alpha_N"/>
    <property type="match status" value="1"/>
</dbReference>
<dbReference type="CDD" id="cd01134">
    <property type="entry name" value="V_A-ATPase_A"/>
    <property type="match status" value="1"/>
</dbReference>
<dbReference type="FunFam" id="1.10.1140.10:FF:000002">
    <property type="entry name" value="V-type proton ATPase catalytic subunit A"/>
    <property type="match status" value="1"/>
</dbReference>
<dbReference type="FunFam" id="2.40.50.100:FF:000008">
    <property type="entry name" value="V-type proton ATPase catalytic subunit A"/>
    <property type="match status" value="1"/>
</dbReference>
<dbReference type="Gene3D" id="2.40.30.20">
    <property type="match status" value="1"/>
</dbReference>
<dbReference type="Gene3D" id="2.40.50.100">
    <property type="match status" value="1"/>
</dbReference>
<dbReference type="Gene3D" id="1.10.1140.10">
    <property type="entry name" value="Bovine Mitochondrial F1-atpase, Atp Synthase Beta Chain, Chain D, domain 3"/>
    <property type="match status" value="1"/>
</dbReference>
<dbReference type="Gene3D" id="3.40.50.300">
    <property type="entry name" value="P-loop containing nucleotide triphosphate hydrolases"/>
    <property type="match status" value="1"/>
</dbReference>
<dbReference type="HAMAP" id="MF_00309">
    <property type="entry name" value="ATP_synth_A_arch"/>
    <property type="match status" value="1"/>
</dbReference>
<dbReference type="InterPro" id="IPR003593">
    <property type="entry name" value="AAA+_ATPase"/>
</dbReference>
<dbReference type="InterPro" id="IPR055190">
    <property type="entry name" value="ATP-synt_VA_C"/>
</dbReference>
<dbReference type="InterPro" id="IPR031686">
    <property type="entry name" value="ATP-synth_a_Xtn"/>
</dbReference>
<dbReference type="InterPro" id="IPR023366">
    <property type="entry name" value="ATP_synth_asu-like_sf"/>
</dbReference>
<dbReference type="InterPro" id="IPR005726">
    <property type="entry name" value="ATP_synth_asu_arc"/>
</dbReference>
<dbReference type="InterPro" id="IPR004100">
    <property type="entry name" value="ATPase_F1/V1/A1_a/bsu_N"/>
</dbReference>
<dbReference type="InterPro" id="IPR036121">
    <property type="entry name" value="ATPase_F1/V1/A1_a/bsu_N_sf"/>
</dbReference>
<dbReference type="InterPro" id="IPR000194">
    <property type="entry name" value="ATPase_F1/V1/A1_a/bsu_nucl-bd"/>
</dbReference>
<dbReference type="InterPro" id="IPR024034">
    <property type="entry name" value="ATPase_F1/V1_b/a_C"/>
</dbReference>
<dbReference type="InterPro" id="IPR027417">
    <property type="entry name" value="P-loop_NTPase"/>
</dbReference>
<dbReference type="InterPro" id="IPR022878">
    <property type="entry name" value="V-ATPase_asu"/>
</dbReference>
<dbReference type="NCBIfam" id="TIGR01043">
    <property type="entry name" value="ATP_syn_A_arch"/>
    <property type="match status" value="1"/>
</dbReference>
<dbReference type="NCBIfam" id="NF003220">
    <property type="entry name" value="PRK04192.1"/>
    <property type="match status" value="1"/>
</dbReference>
<dbReference type="PANTHER" id="PTHR43607:SF1">
    <property type="entry name" value="H(+)-TRANSPORTING TWO-SECTOR ATPASE"/>
    <property type="match status" value="1"/>
</dbReference>
<dbReference type="PANTHER" id="PTHR43607">
    <property type="entry name" value="V-TYPE PROTON ATPASE CATALYTIC SUBUNIT A"/>
    <property type="match status" value="1"/>
</dbReference>
<dbReference type="Pfam" id="PF00006">
    <property type="entry name" value="ATP-synt_ab"/>
    <property type="match status" value="1"/>
</dbReference>
<dbReference type="Pfam" id="PF02874">
    <property type="entry name" value="ATP-synt_ab_N"/>
    <property type="match status" value="1"/>
</dbReference>
<dbReference type="Pfam" id="PF16886">
    <property type="entry name" value="ATP-synt_ab_Xtn"/>
    <property type="match status" value="1"/>
</dbReference>
<dbReference type="Pfam" id="PF22919">
    <property type="entry name" value="ATP-synt_VA_C"/>
    <property type="match status" value="1"/>
</dbReference>
<dbReference type="SMART" id="SM00382">
    <property type="entry name" value="AAA"/>
    <property type="match status" value="1"/>
</dbReference>
<dbReference type="SUPFAM" id="SSF47917">
    <property type="entry name" value="C-terminal domain of alpha and beta subunits of F1 ATP synthase"/>
    <property type="match status" value="1"/>
</dbReference>
<dbReference type="SUPFAM" id="SSF50615">
    <property type="entry name" value="N-terminal domain of alpha and beta subunits of F1 ATP synthase"/>
    <property type="match status" value="1"/>
</dbReference>
<dbReference type="SUPFAM" id="SSF52540">
    <property type="entry name" value="P-loop containing nucleoside triphosphate hydrolases"/>
    <property type="match status" value="1"/>
</dbReference>
<gene>
    <name evidence="1" type="primary">atpA</name>
    <name type="ordered locus">Saci_1548</name>
</gene>
<reference key="1">
    <citation type="journal article" date="2005" name="J. Bacteriol.">
        <title>The genome of Sulfolobus acidocaldarius, a model organism of the Crenarchaeota.</title>
        <authorList>
            <person name="Chen L."/>
            <person name="Bruegger K."/>
            <person name="Skovgaard M."/>
            <person name="Redder P."/>
            <person name="She Q."/>
            <person name="Torarinsson E."/>
            <person name="Greve B."/>
            <person name="Awayez M."/>
            <person name="Zibat A."/>
            <person name="Klenk H.-P."/>
            <person name="Garrett R.A."/>
        </authorList>
    </citation>
    <scope>NUCLEOTIDE SEQUENCE [LARGE SCALE GENOMIC DNA]</scope>
    <source>
        <strain>ATCC 33909 / DSM 639 / JCM 8929 / NBRC 15157 / NCIMB 11770</strain>
    </source>
</reference>
<evidence type="ECO:0000255" key="1">
    <source>
        <dbReference type="HAMAP-Rule" id="MF_00309"/>
    </source>
</evidence>
<organism>
    <name type="scientific">Sulfolobus acidocaldarius (strain ATCC 33909 / DSM 639 / JCM 8929 / NBRC 15157 / NCIMB 11770)</name>
    <dbReference type="NCBI Taxonomy" id="330779"/>
    <lineage>
        <taxon>Archaea</taxon>
        <taxon>Thermoproteota</taxon>
        <taxon>Thermoprotei</taxon>
        <taxon>Sulfolobales</taxon>
        <taxon>Sulfolobaceae</taxon>
        <taxon>Sulfolobus</taxon>
    </lineage>
</organism>
<comment type="function">
    <text>Produces ATP from ADP in the presence of a proton gradient across the membrane. The archaeal alpha chain is a catalytic subunit.</text>
</comment>
<comment type="function">
    <text evidence="1">Component of the A-type ATP synthase that produces ATP from ADP in the presence of a proton gradient across the membrane. The A chain is the catalytic subunit.</text>
</comment>
<comment type="catalytic activity">
    <reaction evidence="1">
        <text>ATP + H2O + 4 H(+)(in) = ADP + phosphate + 5 H(+)(out)</text>
        <dbReference type="Rhea" id="RHEA:57720"/>
        <dbReference type="ChEBI" id="CHEBI:15377"/>
        <dbReference type="ChEBI" id="CHEBI:15378"/>
        <dbReference type="ChEBI" id="CHEBI:30616"/>
        <dbReference type="ChEBI" id="CHEBI:43474"/>
        <dbReference type="ChEBI" id="CHEBI:456216"/>
        <dbReference type="EC" id="7.1.2.2"/>
    </reaction>
</comment>
<comment type="subunit">
    <text evidence="1">Has multiple subunits with at least A(3), B(3), C, D, E, F, H, I and proteolipid K(x).</text>
</comment>
<comment type="subcellular location">
    <subcellularLocation>
        <location evidence="1">Cell membrane</location>
        <topology evidence="1">Peripheral membrane protein</topology>
    </subcellularLocation>
</comment>
<comment type="similarity">
    <text evidence="1">Belongs to the ATPase alpha/beta chains family.</text>
</comment>
<protein>
    <recommendedName>
        <fullName evidence="1">A-type ATP synthase subunit A</fullName>
        <ecNumber evidence="1">7.1.2.2</ecNumber>
    </recommendedName>
</protein>
<proteinExistence type="inferred from homology"/>
<feature type="chain" id="PRO_0000144605" description="A-type ATP synthase subunit A">
    <location>
        <begin position="1"/>
        <end position="592"/>
    </location>
</feature>
<feature type="binding site" evidence="1">
    <location>
        <begin position="234"/>
        <end position="241"/>
    </location>
    <ligand>
        <name>ATP</name>
        <dbReference type="ChEBI" id="CHEBI:30616"/>
    </ligand>
</feature>
<keyword id="KW-0066">ATP synthesis</keyword>
<keyword id="KW-0067">ATP-binding</keyword>
<keyword id="KW-1003">Cell membrane</keyword>
<keyword id="KW-0375">Hydrogen ion transport</keyword>
<keyword id="KW-0406">Ion transport</keyword>
<keyword id="KW-0472">Membrane</keyword>
<keyword id="KW-0547">Nucleotide-binding</keyword>
<keyword id="KW-1185">Reference proteome</keyword>
<keyword id="KW-1278">Translocase</keyword>
<keyword id="KW-0813">Transport</keyword>
<name>AATA_SULAC</name>